<proteinExistence type="inferred from homology"/>
<feature type="chain" id="PRO_1000127668" description="UDP-3-O-acylglucosamine N-acyltransferase">
    <location>
        <begin position="1"/>
        <end position="370"/>
    </location>
</feature>
<feature type="region of interest" description="Disordered" evidence="2">
    <location>
        <begin position="348"/>
        <end position="370"/>
    </location>
</feature>
<feature type="active site" description="Proton acceptor" evidence="1">
    <location>
        <position position="252"/>
    </location>
</feature>
<reference key="1">
    <citation type="journal article" date="2011" name="J. Bacteriol.">
        <title>Complete genome sequence of the plant growth-promoting endophyte Burkholderia phytofirmans strain PsJN.</title>
        <authorList>
            <person name="Weilharter A."/>
            <person name="Mitter B."/>
            <person name="Shin M.V."/>
            <person name="Chain P.S."/>
            <person name="Nowak J."/>
            <person name="Sessitsch A."/>
        </authorList>
    </citation>
    <scope>NUCLEOTIDE SEQUENCE [LARGE SCALE GENOMIC DNA]</scope>
    <source>
        <strain>DSM 17436 / LMG 22146 / PsJN</strain>
    </source>
</reference>
<sequence>MAFTLEDIVQRFGGEVVGDGSQRVGSLAPLDQAGPDQLAFLANPKYLAQVETTRAGAVLINADDLAKLASRENRNFIVTPNPYAYFARVAQTFIDLAAPKAAPGVHPSATIDPSAQIAASAVIGPHVTVEAGAVIGDNVRLDANVVIGRGTRIGAGSHLYPNVAVYHGCKLAERVIVHAGAVIGSDGFGFAPDFVGEGEARTGSWVKIPQVGGVSIAADVEIGANTTIDRGAMADTIIEECVKIDNLVQIGHNCKVGAYTVIAGCAGIAGSTTIGRHCMIGGAVGIAGHVTLADYVIVTAKSGVSKSLLKPGMYTSAFPAVNHADWNKSAALLRNIDKLRDRIKTLENAAAEKRDGPAPNAASKATGDKV</sequence>
<keyword id="KW-0012">Acyltransferase</keyword>
<keyword id="KW-0441">Lipid A biosynthesis</keyword>
<keyword id="KW-0444">Lipid biosynthesis</keyword>
<keyword id="KW-0443">Lipid metabolism</keyword>
<keyword id="KW-0677">Repeat</keyword>
<keyword id="KW-0808">Transferase</keyword>
<dbReference type="EC" id="2.3.1.191" evidence="1"/>
<dbReference type="EMBL" id="CP001052">
    <property type="protein sequence ID" value="ACD16841.1"/>
    <property type="molecule type" value="Genomic_DNA"/>
</dbReference>
<dbReference type="RefSeq" id="WP_012433438.1">
    <property type="nucleotide sequence ID" value="NC_010681.1"/>
</dbReference>
<dbReference type="SMR" id="B2T5I4"/>
<dbReference type="STRING" id="398527.Bphyt_2445"/>
<dbReference type="KEGG" id="bpy:Bphyt_2445"/>
<dbReference type="eggNOG" id="COG1044">
    <property type="taxonomic scope" value="Bacteria"/>
</dbReference>
<dbReference type="HOGENOM" id="CLU_049865_0_1_4"/>
<dbReference type="OrthoDB" id="9784739at2"/>
<dbReference type="UniPathway" id="UPA00973"/>
<dbReference type="Proteomes" id="UP000001739">
    <property type="component" value="Chromosome 1"/>
</dbReference>
<dbReference type="GO" id="GO:0016020">
    <property type="term" value="C:membrane"/>
    <property type="evidence" value="ECO:0007669"/>
    <property type="project" value="GOC"/>
</dbReference>
<dbReference type="GO" id="GO:0016410">
    <property type="term" value="F:N-acyltransferase activity"/>
    <property type="evidence" value="ECO:0007669"/>
    <property type="project" value="InterPro"/>
</dbReference>
<dbReference type="GO" id="GO:0009245">
    <property type="term" value="P:lipid A biosynthetic process"/>
    <property type="evidence" value="ECO:0007669"/>
    <property type="project" value="UniProtKB-UniRule"/>
</dbReference>
<dbReference type="CDD" id="cd03352">
    <property type="entry name" value="LbH_LpxD"/>
    <property type="match status" value="1"/>
</dbReference>
<dbReference type="Gene3D" id="2.160.10.10">
    <property type="entry name" value="Hexapeptide repeat proteins"/>
    <property type="match status" value="1"/>
</dbReference>
<dbReference type="Gene3D" id="3.40.1390.10">
    <property type="entry name" value="MurE/MurF, N-terminal domain"/>
    <property type="match status" value="1"/>
</dbReference>
<dbReference type="HAMAP" id="MF_00523">
    <property type="entry name" value="LpxD"/>
    <property type="match status" value="1"/>
</dbReference>
<dbReference type="InterPro" id="IPR001451">
    <property type="entry name" value="Hexapep"/>
</dbReference>
<dbReference type="InterPro" id="IPR018357">
    <property type="entry name" value="Hexapep_transf_CS"/>
</dbReference>
<dbReference type="InterPro" id="IPR007691">
    <property type="entry name" value="LpxD"/>
</dbReference>
<dbReference type="InterPro" id="IPR011004">
    <property type="entry name" value="Trimer_LpxA-like_sf"/>
</dbReference>
<dbReference type="InterPro" id="IPR020573">
    <property type="entry name" value="UDP_GlcNAc_AcTrfase_non-rep"/>
</dbReference>
<dbReference type="NCBIfam" id="TIGR01853">
    <property type="entry name" value="lipid_A_lpxD"/>
    <property type="match status" value="1"/>
</dbReference>
<dbReference type="NCBIfam" id="NF002060">
    <property type="entry name" value="PRK00892.1"/>
    <property type="match status" value="1"/>
</dbReference>
<dbReference type="PANTHER" id="PTHR43378">
    <property type="entry name" value="UDP-3-O-ACYLGLUCOSAMINE N-ACYLTRANSFERASE"/>
    <property type="match status" value="1"/>
</dbReference>
<dbReference type="PANTHER" id="PTHR43378:SF2">
    <property type="entry name" value="UDP-3-O-ACYLGLUCOSAMINE N-ACYLTRANSFERASE 1, MITOCHONDRIAL-RELATED"/>
    <property type="match status" value="1"/>
</dbReference>
<dbReference type="Pfam" id="PF00132">
    <property type="entry name" value="Hexapep"/>
    <property type="match status" value="2"/>
</dbReference>
<dbReference type="Pfam" id="PF04613">
    <property type="entry name" value="LpxD"/>
    <property type="match status" value="1"/>
</dbReference>
<dbReference type="SUPFAM" id="SSF51161">
    <property type="entry name" value="Trimeric LpxA-like enzymes"/>
    <property type="match status" value="1"/>
</dbReference>
<dbReference type="PROSITE" id="PS00101">
    <property type="entry name" value="HEXAPEP_TRANSFERASES"/>
    <property type="match status" value="4"/>
</dbReference>
<protein>
    <recommendedName>
        <fullName evidence="1">UDP-3-O-acylglucosamine N-acyltransferase</fullName>
        <ecNumber evidence="1">2.3.1.191</ecNumber>
    </recommendedName>
</protein>
<accession>B2T5I4</accession>
<organism>
    <name type="scientific">Paraburkholderia phytofirmans (strain DSM 17436 / LMG 22146 / PsJN)</name>
    <name type="common">Burkholderia phytofirmans</name>
    <dbReference type="NCBI Taxonomy" id="398527"/>
    <lineage>
        <taxon>Bacteria</taxon>
        <taxon>Pseudomonadati</taxon>
        <taxon>Pseudomonadota</taxon>
        <taxon>Betaproteobacteria</taxon>
        <taxon>Burkholderiales</taxon>
        <taxon>Burkholderiaceae</taxon>
        <taxon>Paraburkholderia</taxon>
    </lineage>
</organism>
<name>LPXD_PARPJ</name>
<evidence type="ECO:0000255" key="1">
    <source>
        <dbReference type="HAMAP-Rule" id="MF_00523"/>
    </source>
</evidence>
<evidence type="ECO:0000256" key="2">
    <source>
        <dbReference type="SAM" id="MobiDB-lite"/>
    </source>
</evidence>
<gene>
    <name evidence="1" type="primary">lpxD</name>
    <name type="ordered locus">Bphyt_2445</name>
</gene>
<comment type="function">
    <text evidence="1">Catalyzes the N-acylation of UDP-3-O-acylglucosamine using 3-hydroxyacyl-ACP as the acyl donor. Is involved in the biosynthesis of lipid A, a phosphorylated glycolipid that anchors the lipopolysaccharide to the outer membrane of the cell.</text>
</comment>
<comment type="catalytic activity">
    <reaction evidence="1">
        <text>a UDP-3-O-[(3R)-3-hydroxyacyl]-alpha-D-glucosamine + a (3R)-hydroxyacyl-[ACP] = a UDP-2-N,3-O-bis[(3R)-3-hydroxyacyl]-alpha-D-glucosamine + holo-[ACP] + H(+)</text>
        <dbReference type="Rhea" id="RHEA:53836"/>
        <dbReference type="Rhea" id="RHEA-COMP:9685"/>
        <dbReference type="Rhea" id="RHEA-COMP:9945"/>
        <dbReference type="ChEBI" id="CHEBI:15378"/>
        <dbReference type="ChEBI" id="CHEBI:64479"/>
        <dbReference type="ChEBI" id="CHEBI:78827"/>
        <dbReference type="ChEBI" id="CHEBI:137740"/>
        <dbReference type="ChEBI" id="CHEBI:137748"/>
        <dbReference type="EC" id="2.3.1.191"/>
    </reaction>
</comment>
<comment type="pathway">
    <text evidence="1">Bacterial outer membrane biogenesis; LPS lipid A biosynthesis.</text>
</comment>
<comment type="subunit">
    <text evidence="1">Homotrimer.</text>
</comment>
<comment type="similarity">
    <text evidence="1">Belongs to the transferase hexapeptide repeat family. LpxD subfamily.</text>
</comment>